<feature type="chain" id="PRO_0000368436" description="ATP synthase subunit b">
    <location>
        <begin position="1"/>
        <end position="188"/>
    </location>
</feature>
<feature type="transmembrane region" description="Helical" evidence="1">
    <location>
        <begin position="24"/>
        <end position="44"/>
    </location>
</feature>
<protein>
    <recommendedName>
        <fullName evidence="1">ATP synthase subunit b</fullName>
    </recommendedName>
    <alternativeName>
        <fullName evidence="1">ATP synthase F(0) sector subunit b</fullName>
    </alternativeName>
    <alternativeName>
        <fullName evidence="1">ATPase subunit I</fullName>
    </alternativeName>
    <alternativeName>
        <fullName evidence="1">F-type ATPase subunit b</fullName>
        <shortName evidence="1">F-ATPase subunit b</shortName>
    </alternativeName>
</protein>
<evidence type="ECO:0000255" key="1">
    <source>
        <dbReference type="HAMAP-Rule" id="MF_01398"/>
    </source>
</evidence>
<dbReference type="EMBL" id="BX248356">
    <property type="protein sequence ID" value="CAE49568.1"/>
    <property type="molecule type" value="Genomic_DNA"/>
</dbReference>
<dbReference type="RefSeq" id="WP_010934767.1">
    <property type="nucleotide sequence ID" value="NC_002935.2"/>
</dbReference>
<dbReference type="SMR" id="Q6NHT3"/>
<dbReference type="STRING" id="257309.DIP1048"/>
<dbReference type="KEGG" id="cdi:DIP1048"/>
<dbReference type="HOGENOM" id="CLU_079215_5_2_11"/>
<dbReference type="Proteomes" id="UP000002198">
    <property type="component" value="Chromosome"/>
</dbReference>
<dbReference type="GO" id="GO:0005886">
    <property type="term" value="C:plasma membrane"/>
    <property type="evidence" value="ECO:0007669"/>
    <property type="project" value="UniProtKB-SubCell"/>
</dbReference>
<dbReference type="GO" id="GO:0045259">
    <property type="term" value="C:proton-transporting ATP synthase complex"/>
    <property type="evidence" value="ECO:0007669"/>
    <property type="project" value="UniProtKB-KW"/>
</dbReference>
<dbReference type="GO" id="GO:0046933">
    <property type="term" value="F:proton-transporting ATP synthase activity, rotational mechanism"/>
    <property type="evidence" value="ECO:0007669"/>
    <property type="project" value="UniProtKB-UniRule"/>
</dbReference>
<dbReference type="GO" id="GO:0046961">
    <property type="term" value="F:proton-transporting ATPase activity, rotational mechanism"/>
    <property type="evidence" value="ECO:0007669"/>
    <property type="project" value="TreeGrafter"/>
</dbReference>
<dbReference type="CDD" id="cd06503">
    <property type="entry name" value="ATP-synt_Fo_b"/>
    <property type="match status" value="1"/>
</dbReference>
<dbReference type="Gene3D" id="1.20.5.620">
    <property type="entry name" value="F1F0 ATP synthase subunit B, membrane domain"/>
    <property type="match status" value="1"/>
</dbReference>
<dbReference type="HAMAP" id="MF_01398">
    <property type="entry name" value="ATP_synth_b_bprime"/>
    <property type="match status" value="1"/>
</dbReference>
<dbReference type="InterPro" id="IPR028987">
    <property type="entry name" value="ATP_synth_B-like_membr_sf"/>
</dbReference>
<dbReference type="InterPro" id="IPR002146">
    <property type="entry name" value="ATP_synth_b/b'su_bac/chlpt"/>
</dbReference>
<dbReference type="InterPro" id="IPR005864">
    <property type="entry name" value="ATP_synth_F0_bsu_bac"/>
</dbReference>
<dbReference type="InterPro" id="IPR050059">
    <property type="entry name" value="ATP_synthase_B_chain"/>
</dbReference>
<dbReference type="NCBIfam" id="TIGR01144">
    <property type="entry name" value="ATP_synt_b"/>
    <property type="match status" value="1"/>
</dbReference>
<dbReference type="NCBIfam" id="NF004412">
    <property type="entry name" value="PRK05759.1-3"/>
    <property type="match status" value="1"/>
</dbReference>
<dbReference type="PANTHER" id="PTHR33445:SF1">
    <property type="entry name" value="ATP SYNTHASE SUBUNIT B"/>
    <property type="match status" value="1"/>
</dbReference>
<dbReference type="PANTHER" id="PTHR33445">
    <property type="entry name" value="ATP SYNTHASE SUBUNIT B', CHLOROPLASTIC"/>
    <property type="match status" value="1"/>
</dbReference>
<dbReference type="Pfam" id="PF00430">
    <property type="entry name" value="ATP-synt_B"/>
    <property type="match status" value="1"/>
</dbReference>
<dbReference type="SUPFAM" id="SSF81573">
    <property type="entry name" value="F1F0 ATP synthase subunit B, membrane domain"/>
    <property type="match status" value="1"/>
</dbReference>
<name>ATPF_CORDI</name>
<accession>Q6NHT3</accession>
<reference key="1">
    <citation type="journal article" date="2003" name="Nucleic Acids Res.">
        <title>The complete genome sequence and analysis of Corynebacterium diphtheriae NCTC13129.</title>
        <authorList>
            <person name="Cerdeno-Tarraga A.-M."/>
            <person name="Efstratiou A."/>
            <person name="Dover L.G."/>
            <person name="Holden M.T.G."/>
            <person name="Pallen M.J."/>
            <person name="Bentley S.D."/>
            <person name="Besra G.S."/>
            <person name="Churcher C.M."/>
            <person name="James K.D."/>
            <person name="De Zoysa A."/>
            <person name="Chillingworth T."/>
            <person name="Cronin A."/>
            <person name="Dowd L."/>
            <person name="Feltwell T."/>
            <person name="Hamlin N."/>
            <person name="Holroyd S."/>
            <person name="Jagels K."/>
            <person name="Moule S."/>
            <person name="Quail M.A."/>
            <person name="Rabbinowitsch E."/>
            <person name="Rutherford K.M."/>
            <person name="Thomson N.R."/>
            <person name="Unwin L."/>
            <person name="Whitehead S."/>
            <person name="Barrell B.G."/>
            <person name="Parkhill J."/>
        </authorList>
    </citation>
    <scope>NUCLEOTIDE SEQUENCE [LARGE SCALE GENOMIC DNA]</scope>
    <source>
        <strain>ATCC 700971 / NCTC 13129 / Biotype gravis</strain>
    </source>
</reference>
<comment type="function">
    <text evidence="1">F(1)F(0) ATP synthase produces ATP from ADP in the presence of a proton or sodium gradient. F-type ATPases consist of two structural domains, F(1) containing the extramembraneous catalytic core and F(0) containing the membrane proton channel, linked together by a central stalk and a peripheral stalk. During catalysis, ATP synthesis in the catalytic domain of F(1) is coupled via a rotary mechanism of the central stalk subunits to proton translocation.</text>
</comment>
<comment type="function">
    <text evidence="1">Component of the F(0) channel, it forms part of the peripheral stalk, linking F(1) to F(0).</text>
</comment>
<comment type="subunit">
    <text evidence="1">F-type ATPases have 2 components, F(1) - the catalytic core - and F(0) - the membrane proton channel. F(1) has five subunits: alpha(3), beta(3), gamma(1), delta(1), epsilon(1). F(0) has three main subunits: a(1), b(2) and c(10-14). The alpha and beta chains form an alternating ring which encloses part of the gamma chain. F(1) is attached to F(0) by a central stalk formed by the gamma and epsilon chains, while a peripheral stalk is formed by the delta and b chains.</text>
</comment>
<comment type="subcellular location">
    <subcellularLocation>
        <location evidence="1">Cell membrane</location>
        <topology evidence="1">Single-pass membrane protein</topology>
    </subcellularLocation>
</comment>
<comment type="similarity">
    <text evidence="1">Belongs to the ATPase B chain family.</text>
</comment>
<sequence length="188" mass="21009">MTNVIKYLAEGEALPLEDHPSVLLPASYDIVWSLVVFIIVLILFWKFVRPKYQEVLTEREDRIKGGIQRAEAAQAEAKAALEKYNAQLAEARAEAAEIREEARAKGKQIEAEMKAKATEESNRIIESGEKQLAAQREQVVTELRREMGQNSISLAERLLGDQLSDDVKRSGTIDKFLAELDTVSPAGK</sequence>
<keyword id="KW-0066">ATP synthesis</keyword>
<keyword id="KW-1003">Cell membrane</keyword>
<keyword id="KW-0138">CF(0)</keyword>
<keyword id="KW-0375">Hydrogen ion transport</keyword>
<keyword id="KW-0406">Ion transport</keyword>
<keyword id="KW-0472">Membrane</keyword>
<keyword id="KW-1185">Reference proteome</keyword>
<keyword id="KW-0812">Transmembrane</keyword>
<keyword id="KW-1133">Transmembrane helix</keyword>
<keyword id="KW-0813">Transport</keyword>
<proteinExistence type="inferred from homology"/>
<gene>
    <name evidence="1" type="primary">atpF</name>
    <name type="ordered locus">DIP1048</name>
</gene>
<organism>
    <name type="scientific">Corynebacterium diphtheriae (strain ATCC 700971 / NCTC 13129 / Biotype gravis)</name>
    <dbReference type="NCBI Taxonomy" id="257309"/>
    <lineage>
        <taxon>Bacteria</taxon>
        <taxon>Bacillati</taxon>
        <taxon>Actinomycetota</taxon>
        <taxon>Actinomycetes</taxon>
        <taxon>Mycobacteriales</taxon>
        <taxon>Corynebacteriaceae</taxon>
        <taxon>Corynebacterium</taxon>
    </lineage>
</organism>